<proteinExistence type="inferred from homology"/>
<gene>
    <name evidence="1" type="primary">rplU</name>
    <name type="ordered locus">SUN_1784</name>
</gene>
<accession>A6QB72</accession>
<evidence type="ECO:0000255" key="1">
    <source>
        <dbReference type="HAMAP-Rule" id="MF_01363"/>
    </source>
</evidence>
<evidence type="ECO:0000305" key="2"/>
<sequence length="101" mass="11476">MYAIIKASGQQFKVQEGDIICFDNMGLEPKSAVEFKEVLAVDNGELTVGTPFVEGAVVKGEVINEGRDKKVIIYKKRRRKDSKLKRGFRRDFTRVRITKIA</sequence>
<dbReference type="EMBL" id="AP009179">
    <property type="protein sequence ID" value="BAF72731.1"/>
    <property type="molecule type" value="Genomic_DNA"/>
</dbReference>
<dbReference type="RefSeq" id="WP_012083541.1">
    <property type="nucleotide sequence ID" value="NC_009663.1"/>
</dbReference>
<dbReference type="SMR" id="A6QB72"/>
<dbReference type="STRING" id="387093.SUN_1784"/>
<dbReference type="KEGG" id="sun:SUN_1784"/>
<dbReference type="eggNOG" id="COG0261">
    <property type="taxonomic scope" value="Bacteria"/>
</dbReference>
<dbReference type="HOGENOM" id="CLU_061463_3_1_7"/>
<dbReference type="OrthoDB" id="9813334at2"/>
<dbReference type="Proteomes" id="UP000006378">
    <property type="component" value="Chromosome"/>
</dbReference>
<dbReference type="GO" id="GO:0005737">
    <property type="term" value="C:cytoplasm"/>
    <property type="evidence" value="ECO:0007669"/>
    <property type="project" value="UniProtKB-ARBA"/>
</dbReference>
<dbReference type="GO" id="GO:1990904">
    <property type="term" value="C:ribonucleoprotein complex"/>
    <property type="evidence" value="ECO:0007669"/>
    <property type="project" value="UniProtKB-KW"/>
</dbReference>
<dbReference type="GO" id="GO:0005840">
    <property type="term" value="C:ribosome"/>
    <property type="evidence" value="ECO:0007669"/>
    <property type="project" value="UniProtKB-KW"/>
</dbReference>
<dbReference type="GO" id="GO:0019843">
    <property type="term" value="F:rRNA binding"/>
    <property type="evidence" value="ECO:0007669"/>
    <property type="project" value="UniProtKB-UniRule"/>
</dbReference>
<dbReference type="GO" id="GO:0003735">
    <property type="term" value="F:structural constituent of ribosome"/>
    <property type="evidence" value="ECO:0007669"/>
    <property type="project" value="InterPro"/>
</dbReference>
<dbReference type="GO" id="GO:0006412">
    <property type="term" value="P:translation"/>
    <property type="evidence" value="ECO:0007669"/>
    <property type="project" value="UniProtKB-UniRule"/>
</dbReference>
<dbReference type="HAMAP" id="MF_01363">
    <property type="entry name" value="Ribosomal_bL21"/>
    <property type="match status" value="1"/>
</dbReference>
<dbReference type="InterPro" id="IPR028909">
    <property type="entry name" value="bL21-like"/>
</dbReference>
<dbReference type="InterPro" id="IPR036164">
    <property type="entry name" value="bL21-like_sf"/>
</dbReference>
<dbReference type="InterPro" id="IPR001787">
    <property type="entry name" value="Ribosomal_bL21"/>
</dbReference>
<dbReference type="InterPro" id="IPR018258">
    <property type="entry name" value="Ribosomal_bL21_CS"/>
</dbReference>
<dbReference type="NCBIfam" id="TIGR00061">
    <property type="entry name" value="L21"/>
    <property type="match status" value="1"/>
</dbReference>
<dbReference type="PANTHER" id="PTHR21349">
    <property type="entry name" value="50S RIBOSOMAL PROTEIN L21"/>
    <property type="match status" value="1"/>
</dbReference>
<dbReference type="PANTHER" id="PTHR21349:SF0">
    <property type="entry name" value="LARGE RIBOSOMAL SUBUNIT PROTEIN BL21M"/>
    <property type="match status" value="1"/>
</dbReference>
<dbReference type="Pfam" id="PF00829">
    <property type="entry name" value="Ribosomal_L21p"/>
    <property type="match status" value="1"/>
</dbReference>
<dbReference type="SUPFAM" id="SSF141091">
    <property type="entry name" value="L21p-like"/>
    <property type="match status" value="1"/>
</dbReference>
<dbReference type="PROSITE" id="PS01169">
    <property type="entry name" value="RIBOSOMAL_L21"/>
    <property type="match status" value="1"/>
</dbReference>
<feature type="chain" id="PRO_1000067909" description="Large ribosomal subunit protein bL21">
    <location>
        <begin position="1"/>
        <end position="101"/>
    </location>
</feature>
<reference key="1">
    <citation type="journal article" date="2007" name="Proc. Natl. Acad. Sci. U.S.A.">
        <title>Deep-sea vent epsilon-proteobacterial genomes provide insights into emergence of pathogens.</title>
        <authorList>
            <person name="Nakagawa S."/>
            <person name="Takaki Y."/>
            <person name="Shimamura S."/>
            <person name="Reysenbach A.-L."/>
            <person name="Takai K."/>
            <person name="Horikoshi K."/>
        </authorList>
    </citation>
    <scope>NUCLEOTIDE SEQUENCE [LARGE SCALE GENOMIC DNA]</scope>
    <source>
        <strain>NBC37-1</strain>
    </source>
</reference>
<name>RL21_SULNB</name>
<organism>
    <name type="scientific">Sulfurovum sp. (strain NBC37-1)</name>
    <dbReference type="NCBI Taxonomy" id="387093"/>
    <lineage>
        <taxon>Bacteria</taxon>
        <taxon>Pseudomonadati</taxon>
        <taxon>Campylobacterota</taxon>
        <taxon>Epsilonproteobacteria</taxon>
        <taxon>Campylobacterales</taxon>
        <taxon>Sulfurovaceae</taxon>
        <taxon>Sulfurovum</taxon>
    </lineage>
</organism>
<keyword id="KW-0687">Ribonucleoprotein</keyword>
<keyword id="KW-0689">Ribosomal protein</keyword>
<keyword id="KW-0694">RNA-binding</keyword>
<keyword id="KW-0699">rRNA-binding</keyword>
<protein>
    <recommendedName>
        <fullName evidence="1">Large ribosomal subunit protein bL21</fullName>
    </recommendedName>
    <alternativeName>
        <fullName evidence="2">50S ribosomal protein L21</fullName>
    </alternativeName>
</protein>
<comment type="function">
    <text evidence="1">This protein binds to 23S rRNA in the presence of protein L20.</text>
</comment>
<comment type="subunit">
    <text evidence="1">Part of the 50S ribosomal subunit. Contacts protein L20.</text>
</comment>
<comment type="similarity">
    <text evidence="1">Belongs to the bacterial ribosomal protein bL21 family.</text>
</comment>